<sequence length="913" mass="101963">MFPEDEYQLEFFRTEGFVRKVCESCGGSFWTRDASRRTCGDPPCDPYSFIGSPVFREMELDSMREHYLSFFEAHGHTRVQRYPVVARWRDDIYLTIASIADFQPFVTSGQVPPPANPLTISQPCIRLDDLDSVGRSGRHLTTFEMMAHHVFNTKEHEIYWKDRTVELCDELLLGLGVDPESITYKESPWAGGGNAGPSLEVLVGGLELATLVFMNLRLDSSGEYVIKGERYSRMDNYIVDTGYGLERFVWASKGSPTIYDAVFPDIVRELSDLAGVEHDLHDPEYAEIFARNARLAGMIDLGEASLRDLRKRIAESINTTPERLERIMAPMERIYAIADHTRCLAYMLGDGIIPSNVKAGYLARLVIRRTLRMMKDLKLEIPLSEIVEMQISKLDYDDWRERMETISEILSLEEERYAETLEKGSRMVSKIASHYSKKGGRIPLTELVSLYDTHGIPPEIARETAGALGVDVELPDNFYSIVASTHSRAEQREVETRSPPFEKTERLFYYRPFDQEFDATVLGIFEGSVVLDRTLFYPEGGGQPADRGVLVRDGQVFNVNDVQMIDGVVLHRVEQEGLSPGDRVTGRIDMRRRMAHARHHTATHIVNDSAKRVLGRHVWQAGAQKSEDRARLDISHYRRISDEELKAIELEANRRVMEMIPVITEFMPREEAERLFGFQLYQGGVPPGREIRVVRVGSDIEACAGTHVTNTGMIGPIKILRTERVQDGVERIEFAAGEAAVQRIQERDDILAEAASILRVPIEQLPRTVFRFFEEWKDQQKVIEHLKEEIAGIRILTLSSEAVDVNGVSIVARDMGESDGETLLKAATMLSERDITAILGGASGGAAKIVVSVGRSGLERGLNAADIVRAAAKYIGGGGGGKPDLAQGGGPNVGGLRAAIDAGMSAARKALQV</sequence>
<proteinExistence type="inferred from homology"/>
<gene>
    <name evidence="1" type="primary">alaS</name>
    <name type="ordered locus">Mthe_0657</name>
</gene>
<reference key="1">
    <citation type="submission" date="2006-10" db="EMBL/GenBank/DDBJ databases">
        <title>Complete sequence of Methanosaeta thermophila PT.</title>
        <authorList>
            <consortium name="US DOE Joint Genome Institute"/>
            <person name="Copeland A."/>
            <person name="Lucas S."/>
            <person name="Lapidus A."/>
            <person name="Barry K."/>
            <person name="Detter J.C."/>
            <person name="Glavina del Rio T."/>
            <person name="Hammon N."/>
            <person name="Israni S."/>
            <person name="Pitluck S."/>
            <person name="Chain P."/>
            <person name="Malfatti S."/>
            <person name="Shin M."/>
            <person name="Vergez L."/>
            <person name="Schmutz J."/>
            <person name="Larimer F."/>
            <person name="Land M."/>
            <person name="Hauser L."/>
            <person name="Kyrpides N."/>
            <person name="Kim E."/>
            <person name="Smith K.S."/>
            <person name="Ingram-Smith C."/>
            <person name="Richardson P."/>
        </authorList>
    </citation>
    <scope>NUCLEOTIDE SEQUENCE [LARGE SCALE GENOMIC DNA]</scope>
    <source>
        <strain>DSM 6194 / JCM 14653 / NBRC 101360 / PT</strain>
    </source>
</reference>
<accession>A0B6X3</accession>
<comment type="function">
    <text evidence="1">Catalyzes the attachment of alanine to tRNA(Ala) in a two-step reaction: alanine is first activated by ATP to form Ala-AMP and then transferred to the acceptor end of tRNA(Ala). Also edits incorrectly charged Ser-tRNA(Ala) and Gly-tRNA(Ala) via its editing domain.</text>
</comment>
<comment type="catalytic activity">
    <reaction evidence="1">
        <text>tRNA(Ala) + L-alanine + ATP = L-alanyl-tRNA(Ala) + AMP + diphosphate</text>
        <dbReference type="Rhea" id="RHEA:12540"/>
        <dbReference type="Rhea" id="RHEA-COMP:9657"/>
        <dbReference type="Rhea" id="RHEA-COMP:9923"/>
        <dbReference type="ChEBI" id="CHEBI:30616"/>
        <dbReference type="ChEBI" id="CHEBI:33019"/>
        <dbReference type="ChEBI" id="CHEBI:57972"/>
        <dbReference type="ChEBI" id="CHEBI:78442"/>
        <dbReference type="ChEBI" id="CHEBI:78497"/>
        <dbReference type="ChEBI" id="CHEBI:456215"/>
        <dbReference type="EC" id="6.1.1.7"/>
    </reaction>
</comment>
<comment type="cofactor">
    <cofactor evidence="1">
        <name>Zn(2+)</name>
        <dbReference type="ChEBI" id="CHEBI:29105"/>
    </cofactor>
    <text evidence="1">Binds 1 zinc ion per subunit.</text>
</comment>
<comment type="subcellular location">
    <subcellularLocation>
        <location evidence="1">Cytoplasm</location>
    </subcellularLocation>
</comment>
<comment type="domain">
    <text evidence="1">Consists of three domains; the N-terminal catalytic domain, the editing domain and the C-terminal C-Ala domain. The editing domain removes incorrectly charged amino acids, while the C-Ala domain, along with tRNA(Ala), serves as a bridge to cooperatively bring together the editing and aminoacylation centers thus stimulating deacylation of misacylated tRNAs.</text>
</comment>
<comment type="similarity">
    <text evidence="1">Belongs to the class-II aminoacyl-tRNA synthetase family.</text>
</comment>
<name>SYA_METTP</name>
<keyword id="KW-0030">Aminoacyl-tRNA synthetase</keyword>
<keyword id="KW-0067">ATP-binding</keyword>
<keyword id="KW-0963">Cytoplasm</keyword>
<keyword id="KW-0436">Ligase</keyword>
<keyword id="KW-0479">Metal-binding</keyword>
<keyword id="KW-0547">Nucleotide-binding</keyword>
<keyword id="KW-0648">Protein biosynthesis</keyword>
<keyword id="KW-1185">Reference proteome</keyword>
<keyword id="KW-0694">RNA-binding</keyword>
<keyword id="KW-0820">tRNA-binding</keyword>
<keyword id="KW-0862">Zinc</keyword>
<dbReference type="EC" id="6.1.1.7" evidence="1"/>
<dbReference type="EMBL" id="CP000477">
    <property type="protein sequence ID" value="ABK14447.1"/>
    <property type="molecule type" value="Genomic_DNA"/>
</dbReference>
<dbReference type="RefSeq" id="WP_011695843.1">
    <property type="nucleotide sequence ID" value="NC_008553.1"/>
</dbReference>
<dbReference type="SMR" id="A0B6X3"/>
<dbReference type="STRING" id="349307.Mthe_0657"/>
<dbReference type="GeneID" id="4463151"/>
<dbReference type="KEGG" id="mtp:Mthe_0657"/>
<dbReference type="HOGENOM" id="CLU_004485_4_0_2"/>
<dbReference type="OrthoDB" id="7506at2157"/>
<dbReference type="Proteomes" id="UP000000674">
    <property type="component" value="Chromosome"/>
</dbReference>
<dbReference type="GO" id="GO:0005737">
    <property type="term" value="C:cytoplasm"/>
    <property type="evidence" value="ECO:0007669"/>
    <property type="project" value="UniProtKB-SubCell"/>
</dbReference>
<dbReference type="GO" id="GO:0004813">
    <property type="term" value="F:alanine-tRNA ligase activity"/>
    <property type="evidence" value="ECO:0007669"/>
    <property type="project" value="UniProtKB-UniRule"/>
</dbReference>
<dbReference type="GO" id="GO:0002161">
    <property type="term" value="F:aminoacyl-tRNA deacylase activity"/>
    <property type="evidence" value="ECO:0007669"/>
    <property type="project" value="UniProtKB-ARBA"/>
</dbReference>
<dbReference type="GO" id="GO:0005524">
    <property type="term" value="F:ATP binding"/>
    <property type="evidence" value="ECO:0007669"/>
    <property type="project" value="UniProtKB-UniRule"/>
</dbReference>
<dbReference type="GO" id="GO:0000049">
    <property type="term" value="F:tRNA binding"/>
    <property type="evidence" value="ECO:0007669"/>
    <property type="project" value="UniProtKB-KW"/>
</dbReference>
<dbReference type="GO" id="GO:0008270">
    <property type="term" value="F:zinc ion binding"/>
    <property type="evidence" value="ECO:0007669"/>
    <property type="project" value="UniProtKB-UniRule"/>
</dbReference>
<dbReference type="GO" id="GO:0006419">
    <property type="term" value="P:alanyl-tRNA aminoacylation"/>
    <property type="evidence" value="ECO:0007669"/>
    <property type="project" value="UniProtKB-UniRule"/>
</dbReference>
<dbReference type="CDD" id="cd00673">
    <property type="entry name" value="AlaRS_core"/>
    <property type="match status" value="1"/>
</dbReference>
<dbReference type="FunFam" id="3.10.310.40:FF:000001">
    <property type="entry name" value="Alanine--tRNA ligase"/>
    <property type="match status" value="1"/>
</dbReference>
<dbReference type="FunFam" id="3.30.54.20:FF:000005">
    <property type="entry name" value="Alanine--tRNA ligase"/>
    <property type="match status" value="1"/>
</dbReference>
<dbReference type="FunFam" id="3.30.930.10:FF:000056">
    <property type="entry name" value="Alanine--tRNA ligase"/>
    <property type="match status" value="1"/>
</dbReference>
<dbReference type="FunFam" id="3.30.980.10:FF:000004">
    <property type="entry name" value="Alanine--tRNA ligase, cytoplasmic"/>
    <property type="match status" value="1"/>
</dbReference>
<dbReference type="Gene3D" id="2.40.30.130">
    <property type="match status" value="1"/>
</dbReference>
<dbReference type="Gene3D" id="3.10.310.40">
    <property type="match status" value="1"/>
</dbReference>
<dbReference type="Gene3D" id="3.30.54.20">
    <property type="match status" value="1"/>
</dbReference>
<dbReference type="Gene3D" id="6.10.250.550">
    <property type="match status" value="1"/>
</dbReference>
<dbReference type="Gene3D" id="3.30.930.10">
    <property type="entry name" value="Bira Bifunctional Protein, Domain 2"/>
    <property type="match status" value="1"/>
</dbReference>
<dbReference type="Gene3D" id="3.30.980.10">
    <property type="entry name" value="Threonyl-trna Synthetase, Chain A, domain 2"/>
    <property type="match status" value="1"/>
</dbReference>
<dbReference type="HAMAP" id="MF_00036_A">
    <property type="entry name" value="Ala_tRNA_synth_A"/>
    <property type="match status" value="1"/>
</dbReference>
<dbReference type="InterPro" id="IPR006195">
    <property type="entry name" value="aa-tRNA-synth_II"/>
</dbReference>
<dbReference type="InterPro" id="IPR045864">
    <property type="entry name" value="aa-tRNA-synth_II/BPL/LPL"/>
</dbReference>
<dbReference type="InterPro" id="IPR002318">
    <property type="entry name" value="Ala-tRNA-lgiase_IIc"/>
</dbReference>
<dbReference type="InterPro" id="IPR018162">
    <property type="entry name" value="Ala-tRNA-ligase_IIc_anticod-bd"/>
</dbReference>
<dbReference type="InterPro" id="IPR018165">
    <property type="entry name" value="Ala-tRNA-synth_IIc_core"/>
</dbReference>
<dbReference type="InterPro" id="IPR018164">
    <property type="entry name" value="Ala-tRNA-synth_IIc_N"/>
</dbReference>
<dbReference type="InterPro" id="IPR022429">
    <property type="entry name" value="Ala-tRNA_lgiase_arc"/>
</dbReference>
<dbReference type="InterPro" id="IPR050058">
    <property type="entry name" value="Ala-tRNA_ligase"/>
</dbReference>
<dbReference type="InterPro" id="IPR003156">
    <property type="entry name" value="DHHA1_dom"/>
</dbReference>
<dbReference type="InterPro" id="IPR018163">
    <property type="entry name" value="Thr/Ala-tRNA-synth_IIc_edit"/>
</dbReference>
<dbReference type="InterPro" id="IPR009000">
    <property type="entry name" value="Transl_B-barrel_sf"/>
</dbReference>
<dbReference type="InterPro" id="IPR012947">
    <property type="entry name" value="tRNA_SAD"/>
</dbReference>
<dbReference type="NCBIfam" id="TIGR03683">
    <property type="entry name" value="A-tRNA_syn_arch"/>
    <property type="match status" value="1"/>
</dbReference>
<dbReference type="NCBIfam" id="TIGR00344">
    <property type="entry name" value="alaS"/>
    <property type="match status" value="1"/>
</dbReference>
<dbReference type="PANTHER" id="PTHR11777:SF9">
    <property type="entry name" value="ALANINE--TRNA LIGASE, CYTOPLASMIC"/>
    <property type="match status" value="1"/>
</dbReference>
<dbReference type="PANTHER" id="PTHR11777">
    <property type="entry name" value="ALANYL-TRNA SYNTHETASE"/>
    <property type="match status" value="1"/>
</dbReference>
<dbReference type="Pfam" id="PF02272">
    <property type="entry name" value="DHHA1"/>
    <property type="match status" value="1"/>
</dbReference>
<dbReference type="Pfam" id="PF01411">
    <property type="entry name" value="tRNA-synt_2c"/>
    <property type="match status" value="1"/>
</dbReference>
<dbReference type="Pfam" id="PF07973">
    <property type="entry name" value="tRNA_SAD"/>
    <property type="match status" value="1"/>
</dbReference>
<dbReference type="PRINTS" id="PR00980">
    <property type="entry name" value="TRNASYNTHALA"/>
</dbReference>
<dbReference type="SMART" id="SM00863">
    <property type="entry name" value="tRNA_SAD"/>
    <property type="match status" value="1"/>
</dbReference>
<dbReference type="SUPFAM" id="SSF55681">
    <property type="entry name" value="Class II aaRS and biotin synthetases"/>
    <property type="match status" value="1"/>
</dbReference>
<dbReference type="SUPFAM" id="SSF101353">
    <property type="entry name" value="Putative anticodon-binding domain of alanyl-tRNA synthetase (AlaRS)"/>
    <property type="match status" value="1"/>
</dbReference>
<dbReference type="SUPFAM" id="SSF55186">
    <property type="entry name" value="ThrRS/AlaRS common domain"/>
    <property type="match status" value="1"/>
</dbReference>
<dbReference type="SUPFAM" id="SSF50447">
    <property type="entry name" value="Translation proteins"/>
    <property type="match status" value="1"/>
</dbReference>
<dbReference type="PROSITE" id="PS50860">
    <property type="entry name" value="AA_TRNA_LIGASE_II_ALA"/>
    <property type="match status" value="1"/>
</dbReference>
<protein>
    <recommendedName>
        <fullName evidence="1">Alanine--tRNA ligase</fullName>
        <ecNumber evidence="1">6.1.1.7</ecNumber>
    </recommendedName>
    <alternativeName>
        <fullName evidence="1">Alanyl-tRNA synthetase</fullName>
        <shortName evidence="1">AlaRS</shortName>
    </alternativeName>
</protein>
<evidence type="ECO:0000255" key="1">
    <source>
        <dbReference type="HAMAP-Rule" id="MF_00036"/>
    </source>
</evidence>
<feature type="chain" id="PRO_0000347887" description="Alanine--tRNA ligase">
    <location>
        <begin position="1"/>
        <end position="913"/>
    </location>
</feature>
<feature type="binding site" evidence="1">
    <location>
        <position position="600"/>
    </location>
    <ligand>
        <name>Zn(2+)</name>
        <dbReference type="ChEBI" id="CHEBI:29105"/>
    </ligand>
</feature>
<feature type="binding site" evidence="1">
    <location>
        <position position="604"/>
    </location>
    <ligand>
        <name>Zn(2+)</name>
        <dbReference type="ChEBI" id="CHEBI:29105"/>
    </ligand>
</feature>
<feature type="binding site" evidence="1">
    <location>
        <position position="703"/>
    </location>
    <ligand>
        <name>Zn(2+)</name>
        <dbReference type="ChEBI" id="CHEBI:29105"/>
    </ligand>
</feature>
<feature type="binding site" evidence="1">
    <location>
        <position position="707"/>
    </location>
    <ligand>
        <name>Zn(2+)</name>
        <dbReference type="ChEBI" id="CHEBI:29105"/>
    </ligand>
</feature>
<organism>
    <name type="scientific">Methanothrix thermoacetophila (strain DSM 6194 / JCM 14653 / NBRC 101360 / PT)</name>
    <name type="common">Methanosaeta thermophila</name>
    <dbReference type="NCBI Taxonomy" id="349307"/>
    <lineage>
        <taxon>Archaea</taxon>
        <taxon>Methanobacteriati</taxon>
        <taxon>Methanobacteriota</taxon>
        <taxon>Stenosarchaea group</taxon>
        <taxon>Methanomicrobia</taxon>
        <taxon>Methanotrichales</taxon>
        <taxon>Methanotrichaceae</taxon>
        <taxon>Methanothrix</taxon>
    </lineage>
</organism>